<accession>A9LMC0</accession>
<accession>Q5RIJ2</accession>
<proteinExistence type="evidence at transcript level"/>
<feature type="chain" id="PRO_0000355186" description="Zinc finger protein DPF3">
    <location>
        <begin position="1"/>
        <end position="391"/>
    </location>
</feature>
<feature type="zinc finger region" description="C2H2-type">
    <location>
        <begin position="198"/>
        <end position="235"/>
    </location>
</feature>
<feature type="zinc finger region" description="PHD-type 1" evidence="4">
    <location>
        <begin position="273"/>
        <end position="333"/>
    </location>
</feature>
<feature type="zinc finger region" description="PHD-type 2" evidence="4">
    <location>
        <begin position="330"/>
        <end position="380"/>
    </location>
</feature>
<feature type="region of interest" description="Disordered" evidence="5">
    <location>
        <begin position="152"/>
        <end position="200"/>
    </location>
</feature>
<feature type="region of interest" description="Disordered" evidence="5">
    <location>
        <begin position="236"/>
        <end position="266"/>
    </location>
</feature>
<feature type="compositionally biased region" description="Acidic residues" evidence="5">
    <location>
        <begin position="152"/>
        <end position="165"/>
    </location>
</feature>
<feature type="compositionally biased region" description="Basic residues" evidence="5">
    <location>
        <begin position="169"/>
        <end position="183"/>
    </location>
</feature>
<name>DPF3_DANRE</name>
<protein>
    <recommendedName>
        <fullName>Zinc finger protein DPF3</fullName>
    </recommendedName>
</protein>
<organism>
    <name type="scientific">Danio rerio</name>
    <name type="common">Zebrafish</name>
    <name type="synonym">Brachydanio rerio</name>
    <dbReference type="NCBI Taxonomy" id="7955"/>
    <lineage>
        <taxon>Eukaryota</taxon>
        <taxon>Metazoa</taxon>
        <taxon>Chordata</taxon>
        <taxon>Craniata</taxon>
        <taxon>Vertebrata</taxon>
        <taxon>Euteleostomi</taxon>
        <taxon>Actinopterygii</taxon>
        <taxon>Neopterygii</taxon>
        <taxon>Teleostei</taxon>
        <taxon>Ostariophysi</taxon>
        <taxon>Cypriniformes</taxon>
        <taxon>Danionidae</taxon>
        <taxon>Danioninae</taxon>
        <taxon>Danio</taxon>
    </lineage>
</organism>
<gene>
    <name type="primary">dpf3</name>
    <name type="ORF">si:ch211-268e23.1</name>
</gene>
<comment type="function">
    <text evidence="1 6">Muscle-specific component of the BAF complex, a multiprotein complex involved in transcriptional activation and repression of select genes by chromatin remodeling (alteration of DNA-nucleosome topology). Specifically binds acetylated lysines on histone 3 and 4. In the complex, it acts as a tissue-specific anchor between histone acetylations and methylations and chromatin remodeling. Belongs to the neuron-specific chromatin remodeling complex (nBAF complex) and may play a role in neural development (By similarity). Plays an essential role in heart and skeletal muscle development.</text>
</comment>
<comment type="subunit">
    <text evidence="2 3">Component of the BAF complex. Interacts with acetylated histones H3 and H4. Component of neuron-specific chromatin remodeling complex (nBAF complex), a subfamily of ATP-dependent SWI/SNF chromatin remodeling complexes (By similarity).</text>
</comment>
<comment type="subcellular location">
    <subcellularLocation>
        <location evidence="3">Nucleus</location>
    </subcellularLocation>
</comment>
<comment type="tissue specificity">
    <text evidence="6">Expressed in the heart and somites.</text>
</comment>
<comment type="domain">
    <text evidence="1">The PHD-type zinc fingers mediate the binding to acetylated histones.</text>
</comment>
<comment type="sequence caution" evidence="7">
    <conflict type="erroneous gene model prediction">
        <sequence resource="EMBL-CDS" id="CAI11958"/>
    </conflict>
</comment>
<dbReference type="EMBL" id="EU245032">
    <property type="protein sequence ID" value="ABX10892.1"/>
    <property type="molecule type" value="mRNA"/>
</dbReference>
<dbReference type="EMBL" id="BX255881">
    <property type="protein sequence ID" value="CAI11958.2"/>
    <property type="status" value="ALT_SEQ"/>
    <property type="molecule type" value="Genomic_DNA"/>
</dbReference>
<dbReference type="RefSeq" id="NP_001104639.1">
    <property type="nucleotide sequence ID" value="NM_001111169.1"/>
</dbReference>
<dbReference type="SMR" id="A9LMC0"/>
<dbReference type="FunCoup" id="A9LMC0">
    <property type="interactions" value="1288"/>
</dbReference>
<dbReference type="STRING" id="7955.ENSDARP00000032706"/>
<dbReference type="PaxDb" id="7955-ENSDARP00000109205"/>
<dbReference type="Ensembl" id="ENSDART00000034245">
    <property type="protein sequence ID" value="ENSDARP00000032706"/>
    <property type="gene ID" value="ENSDARG00000025309"/>
</dbReference>
<dbReference type="GeneID" id="562738"/>
<dbReference type="KEGG" id="dre:562738"/>
<dbReference type="AGR" id="ZFIN:ZDB-GENE-041014-190"/>
<dbReference type="CTD" id="8110"/>
<dbReference type="ZFIN" id="ZDB-GENE-041014-190">
    <property type="gene designation" value="dpf3"/>
</dbReference>
<dbReference type="eggNOG" id="KOG1244">
    <property type="taxonomic scope" value="Eukaryota"/>
</dbReference>
<dbReference type="InParanoid" id="A9LMC0"/>
<dbReference type="OMA" id="CLQFTIN"/>
<dbReference type="OrthoDB" id="1903104at2759"/>
<dbReference type="PhylomeDB" id="A9LMC0"/>
<dbReference type="TreeFam" id="TF318971"/>
<dbReference type="PRO" id="PR:A9LMC0"/>
<dbReference type="Proteomes" id="UP000000437">
    <property type="component" value="Chromosome 20"/>
</dbReference>
<dbReference type="Bgee" id="ENSDARG00000025309">
    <property type="expression patterns" value="Expressed in retina and 17 other cell types or tissues"/>
</dbReference>
<dbReference type="ExpressionAtlas" id="A9LMC0">
    <property type="expression patterns" value="baseline"/>
</dbReference>
<dbReference type="GO" id="GO:0071565">
    <property type="term" value="C:nBAF complex"/>
    <property type="evidence" value="ECO:0000318"/>
    <property type="project" value="GO_Central"/>
</dbReference>
<dbReference type="GO" id="GO:0016514">
    <property type="term" value="C:SWI/SNF complex"/>
    <property type="evidence" value="ECO:0000250"/>
    <property type="project" value="ZFIN"/>
</dbReference>
<dbReference type="GO" id="GO:0042393">
    <property type="term" value="F:histone binding"/>
    <property type="evidence" value="ECO:0000250"/>
    <property type="project" value="ZFIN"/>
</dbReference>
<dbReference type="GO" id="GO:0008270">
    <property type="term" value="F:zinc ion binding"/>
    <property type="evidence" value="ECO:0007669"/>
    <property type="project" value="UniProtKB-KW"/>
</dbReference>
<dbReference type="GO" id="GO:0055008">
    <property type="term" value="P:cardiac muscle tissue morphogenesis"/>
    <property type="evidence" value="ECO:0000315"/>
    <property type="project" value="ZFIN"/>
</dbReference>
<dbReference type="GO" id="GO:0006338">
    <property type="term" value="P:chromatin remodeling"/>
    <property type="evidence" value="ECO:0000250"/>
    <property type="project" value="ZFIN"/>
</dbReference>
<dbReference type="GO" id="GO:0048644">
    <property type="term" value="P:muscle organ morphogenesis"/>
    <property type="evidence" value="ECO:0000315"/>
    <property type="project" value="ZFIN"/>
</dbReference>
<dbReference type="GO" id="GO:0007399">
    <property type="term" value="P:nervous system development"/>
    <property type="evidence" value="ECO:0000318"/>
    <property type="project" value="GO_Central"/>
</dbReference>
<dbReference type="GO" id="GO:0006355">
    <property type="term" value="P:regulation of DNA-templated transcription"/>
    <property type="evidence" value="ECO:0000315"/>
    <property type="project" value="ZFIN"/>
</dbReference>
<dbReference type="CDD" id="cd15691">
    <property type="entry name" value="PHD1_DPF2_like"/>
    <property type="match status" value="1"/>
</dbReference>
<dbReference type="CDD" id="cd15530">
    <property type="entry name" value="PHD2_d4"/>
    <property type="match status" value="1"/>
</dbReference>
<dbReference type="FunFam" id="3.30.40.10:FF:000005">
    <property type="entry name" value="zinc finger protein isoform X1"/>
    <property type="match status" value="1"/>
</dbReference>
<dbReference type="Gene3D" id="3.30.40.10">
    <property type="entry name" value="Zinc/RING finger domain, C3HC4 (zinc finger)"/>
    <property type="match status" value="1"/>
</dbReference>
<dbReference type="InterPro" id="IPR025750">
    <property type="entry name" value="DPF1-3_N"/>
</dbReference>
<dbReference type="InterPro" id="IPR011011">
    <property type="entry name" value="Znf_FYVE_PHD"/>
</dbReference>
<dbReference type="InterPro" id="IPR001965">
    <property type="entry name" value="Znf_PHD"/>
</dbReference>
<dbReference type="InterPro" id="IPR019787">
    <property type="entry name" value="Znf_PHD-finger"/>
</dbReference>
<dbReference type="InterPro" id="IPR013083">
    <property type="entry name" value="Znf_RING/FYVE/PHD"/>
</dbReference>
<dbReference type="PANTHER" id="PTHR45888">
    <property type="entry name" value="HL01030P-RELATED"/>
    <property type="match status" value="1"/>
</dbReference>
<dbReference type="PANTHER" id="PTHR45888:SF10">
    <property type="entry name" value="ZINC FINGER PROTEIN DPF3"/>
    <property type="match status" value="1"/>
</dbReference>
<dbReference type="Pfam" id="PF14051">
    <property type="entry name" value="DPF1-3_N"/>
    <property type="match status" value="1"/>
</dbReference>
<dbReference type="Pfam" id="PF00628">
    <property type="entry name" value="PHD"/>
    <property type="match status" value="2"/>
</dbReference>
<dbReference type="SMART" id="SM00249">
    <property type="entry name" value="PHD"/>
    <property type="match status" value="2"/>
</dbReference>
<dbReference type="SUPFAM" id="SSF57903">
    <property type="entry name" value="FYVE/PHD zinc finger"/>
    <property type="match status" value="2"/>
</dbReference>
<dbReference type="PROSITE" id="PS01359">
    <property type="entry name" value="ZF_PHD_1"/>
    <property type="match status" value="1"/>
</dbReference>
<dbReference type="PROSITE" id="PS50016">
    <property type="entry name" value="ZF_PHD_2"/>
    <property type="match status" value="2"/>
</dbReference>
<evidence type="ECO:0000250" key="1"/>
<evidence type="ECO:0000250" key="2">
    <source>
        <dbReference type="UniProtKB" id="P58269"/>
    </source>
</evidence>
<evidence type="ECO:0000250" key="3">
    <source>
        <dbReference type="UniProtKB" id="Q92784"/>
    </source>
</evidence>
<evidence type="ECO:0000255" key="4">
    <source>
        <dbReference type="PROSITE-ProRule" id="PRU00146"/>
    </source>
</evidence>
<evidence type="ECO:0000256" key="5">
    <source>
        <dbReference type="SAM" id="MobiDB-lite"/>
    </source>
</evidence>
<evidence type="ECO:0000269" key="6">
    <source>
    </source>
</evidence>
<evidence type="ECO:0000305" key="7"/>
<keyword id="KW-0010">Activator</keyword>
<keyword id="KW-0156">Chromatin regulator</keyword>
<keyword id="KW-0479">Metal-binding</keyword>
<keyword id="KW-0524">Neurogenesis</keyword>
<keyword id="KW-0539">Nucleus</keyword>
<keyword id="KW-1185">Reference proteome</keyword>
<keyword id="KW-0677">Repeat</keyword>
<keyword id="KW-0678">Repressor</keyword>
<keyword id="KW-0804">Transcription</keyword>
<keyword id="KW-0805">Transcription regulation</keyword>
<keyword id="KW-0862">Zinc</keyword>
<keyword id="KW-0863">Zinc-finger</keyword>
<sequence length="391" mass="44635">MATVIQNPLKALGDQFYREAIEHCRSYNARLCAERSVRMPFLDSQTGVAQNNCYIWMEKRHRGPGMAAGQMYTYPARCWRKKRRLHTPLDPQLRLCELRLEAELMAKREAPQTEATALEALLRGDGILDKRNNNAKEEETLLEIQRVLEADENGDGFHDDEDFEVDTPKRKHRNKGRGRGSGRRRTEAVANDDQDKPYVCDNRYKQKHNSKTADSVCGKRYKNRPGLSYHYAHTHLAEEEGEEERETEIPQSPPVHHENHKPQKAPDGSIIPNDYCDFCLGDSGSNRKTGQAEELVSCSDCGRSGHPSCLQFTDNMMQAVRTYQWQCIECKSCSLCGTSENDDQLLFCDDCDRGYHMYCLKPPMTQPPEGSWSCHLCQNLLKDKASGVEDP</sequence>
<reference key="1">
    <citation type="journal article" date="2008" name="Genes Dev.">
        <title>Regulation of muscle development by DPF3, a novel histone acetylation and methylation reader of the BAF chromatin remodeling complex.</title>
        <authorList>
            <person name="Lange M."/>
            <person name="Kaynak B."/>
            <person name="Forster U.B."/>
            <person name="Toenjes M."/>
            <person name="Fischer J.J."/>
            <person name="Grimm C."/>
            <person name="Schlesinger J."/>
            <person name="Just S."/>
            <person name="Dunkel I."/>
            <person name="Krueger T."/>
            <person name="Mebus S."/>
            <person name="Lehrach H."/>
            <person name="Lurz R."/>
            <person name="Gobom J."/>
            <person name="Rottbauer W."/>
            <person name="Abdelilah-Seyfried S."/>
            <person name="Sperling S."/>
        </authorList>
    </citation>
    <scope>NUCLEOTIDE SEQUENCE [MRNA]</scope>
    <scope>FUNCTION</scope>
    <scope>TISSUE SPECIFICITY</scope>
    <source>
        <tissue>Heart</tissue>
    </source>
</reference>
<reference key="2">
    <citation type="journal article" date="2013" name="Nature">
        <title>The zebrafish reference genome sequence and its relationship to the human genome.</title>
        <authorList>
            <person name="Howe K."/>
            <person name="Clark M.D."/>
            <person name="Torroja C.F."/>
            <person name="Torrance J."/>
            <person name="Berthelot C."/>
            <person name="Muffato M."/>
            <person name="Collins J.E."/>
            <person name="Humphray S."/>
            <person name="McLaren K."/>
            <person name="Matthews L."/>
            <person name="McLaren S."/>
            <person name="Sealy I."/>
            <person name="Caccamo M."/>
            <person name="Churcher C."/>
            <person name="Scott C."/>
            <person name="Barrett J.C."/>
            <person name="Koch R."/>
            <person name="Rauch G.J."/>
            <person name="White S."/>
            <person name="Chow W."/>
            <person name="Kilian B."/>
            <person name="Quintais L.T."/>
            <person name="Guerra-Assuncao J.A."/>
            <person name="Zhou Y."/>
            <person name="Gu Y."/>
            <person name="Yen J."/>
            <person name="Vogel J.H."/>
            <person name="Eyre T."/>
            <person name="Redmond S."/>
            <person name="Banerjee R."/>
            <person name="Chi J."/>
            <person name="Fu B."/>
            <person name="Langley E."/>
            <person name="Maguire S.F."/>
            <person name="Laird G.K."/>
            <person name="Lloyd D."/>
            <person name="Kenyon E."/>
            <person name="Donaldson S."/>
            <person name="Sehra H."/>
            <person name="Almeida-King J."/>
            <person name="Loveland J."/>
            <person name="Trevanion S."/>
            <person name="Jones M."/>
            <person name="Quail M."/>
            <person name="Willey D."/>
            <person name="Hunt A."/>
            <person name="Burton J."/>
            <person name="Sims S."/>
            <person name="McLay K."/>
            <person name="Plumb B."/>
            <person name="Davis J."/>
            <person name="Clee C."/>
            <person name="Oliver K."/>
            <person name="Clark R."/>
            <person name="Riddle C."/>
            <person name="Elliot D."/>
            <person name="Threadgold G."/>
            <person name="Harden G."/>
            <person name="Ware D."/>
            <person name="Begum S."/>
            <person name="Mortimore B."/>
            <person name="Kerry G."/>
            <person name="Heath P."/>
            <person name="Phillimore B."/>
            <person name="Tracey A."/>
            <person name="Corby N."/>
            <person name="Dunn M."/>
            <person name="Johnson C."/>
            <person name="Wood J."/>
            <person name="Clark S."/>
            <person name="Pelan S."/>
            <person name="Griffiths G."/>
            <person name="Smith M."/>
            <person name="Glithero R."/>
            <person name="Howden P."/>
            <person name="Barker N."/>
            <person name="Lloyd C."/>
            <person name="Stevens C."/>
            <person name="Harley J."/>
            <person name="Holt K."/>
            <person name="Panagiotidis G."/>
            <person name="Lovell J."/>
            <person name="Beasley H."/>
            <person name="Henderson C."/>
            <person name="Gordon D."/>
            <person name="Auger K."/>
            <person name="Wright D."/>
            <person name="Collins J."/>
            <person name="Raisen C."/>
            <person name="Dyer L."/>
            <person name="Leung K."/>
            <person name="Robertson L."/>
            <person name="Ambridge K."/>
            <person name="Leongamornlert D."/>
            <person name="McGuire S."/>
            <person name="Gilderthorp R."/>
            <person name="Griffiths C."/>
            <person name="Manthravadi D."/>
            <person name="Nichol S."/>
            <person name="Barker G."/>
            <person name="Whitehead S."/>
            <person name="Kay M."/>
            <person name="Brown J."/>
            <person name="Murnane C."/>
            <person name="Gray E."/>
            <person name="Humphries M."/>
            <person name="Sycamore N."/>
            <person name="Barker D."/>
            <person name="Saunders D."/>
            <person name="Wallis J."/>
            <person name="Babbage A."/>
            <person name="Hammond S."/>
            <person name="Mashreghi-Mohammadi M."/>
            <person name="Barr L."/>
            <person name="Martin S."/>
            <person name="Wray P."/>
            <person name="Ellington A."/>
            <person name="Matthews N."/>
            <person name="Ellwood M."/>
            <person name="Woodmansey R."/>
            <person name="Clark G."/>
            <person name="Cooper J."/>
            <person name="Tromans A."/>
            <person name="Grafham D."/>
            <person name="Skuce C."/>
            <person name="Pandian R."/>
            <person name="Andrews R."/>
            <person name="Harrison E."/>
            <person name="Kimberley A."/>
            <person name="Garnett J."/>
            <person name="Fosker N."/>
            <person name="Hall R."/>
            <person name="Garner P."/>
            <person name="Kelly D."/>
            <person name="Bird C."/>
            <person name="Palmer S."/>
            <person name="Gehring I."/>
            <person name="Berger A."/>
            <person name="Dooley C.M."/>
            <person name="Ersan-Urun Z."/>
            <person name="Eser C."/>
            <person name="Geiger H."/>
            <person name="Geisler M."/>
            <person name="Karotki L."/>
            <person name="Kirn A."/>
            <person name="Konantz J."/>
            <person name="Konantz M."/>
            <person name="Oberlander M."/>
            <person name="Rudolph-Geiger S."/>
            <person name="Teucke M."/>
            <person name="Lanz C."/>
            <person name="Raddatz G."/>
            <person name="Osoegawa K."/>
            <person name="Zhu B."/>
            <person name="Rapp A."/>
            <person name="Widaa S."/>
            <person name="Langford C."/>
            <person name="Yang F."/>
            <person name="Schuster S.C."/>
            <person name="Carter N.P."/>
            <person name="Harrow J."/>
            <person name="Ning Z."/>
            <person name="Herrero J."/>
            <person name="Searle S.M."/>
            <person name="Enright A."/>
            <person name="Geisler R."/>
            <person name="Plasterk R.H."/>
            <person name="Lee C."/>
            <person name="Westerfield M."/>
            <person name="de Jong P.J."/>
            <person name="Zon L.I."/>
            <person name="Postlethwait J.H."/>
            <person name="Nusslein-Volhard C."/>
            <person name="Hubbard T.J."/>
            <person name="Roest Crollius H."/>
            <person name="Rogers J."/>
            <person name="Stemple D.L."/>
        </authorList>
    </citation>
    <scope>NUCLEOTIDE SEQUENCE [LARGE SCALE GENOMIC DNA]</scope>
    <source>
        <strain>Tuebingen</strain>
    </source>
</reference>